<gene>
    <name type="primary">Pspc1</name>
</gene>
<dbReference type="EMBL" id="BC099204">
    <property type="protein sequence ID" value="AAH99204.1"/>
    <property type="molecule type" value="mRNA"/>
</dbReference>
<dbReference type="RefSeq" id="NP_001020843.1">
    <property type="nucleotide sequence ID" value="NM_001025672.2"/>
</dbReference>
<dbReference type="RefSeq" id="XP_063130332.1">
    <property type="nucleotide sequence ID" value="XM_063274262.1"/>
</dbReference>
<dbReference type="SMR" id="Q4KLH4"/>
<dbReference type="BioGRID" id="258303">
    <property type="interactions" value="1"/>
</dbReference>
<dbReference type="FunCoup" id="Q4KLH4">
    <property type="interactions" value="4043"/>
</dbReference>
<dbReference type="STRING" id="10116.ENSRNOP00000028219"/>
<dbReference type="iPTMnet" id="Q4KLH4"/>
<dbReference type="PhosphoSitePlus" id="Q4KLH4"/>
<dbReference type="jPOST" id="Q4KLH4"/>
<dbReference type="PaxDb" id="10116-ENSRNOP00000028219"/>
<dbReference type="Ensembl" id="ENSRNOT00000028219.7">
    <property type="protein sequence ID" value="ENSRNOP00000028219.4"/>
    <property type="gene ID" value="ENSRNOG00000020782.8"/>
</dbReference>
<dbReference type="GeneID" id="305910"/>
<dbReference type="KEGG" id="rno:305910"/>
<dbReference type="UCSC" id="RGD:1310122">
    <property type="organism name" value="rat"/>
</dbReference>
<dbReference type="AGR" id="RGD:1310122"/>
<dbReference type="CTD" id="55269"/>
<dbReference type="RGD" id="1310122">
    <property type="gene designation" value="Pspc1"/>
</dbReference>
<dbReference type="eggNOG" id="KOG0115">
    <property type="taxonomic scope" value="Eukaryota"/>
</dbReference>
<dbReference type="GeneTree" id="ENSGT00940000157358"/>
<dbReference type="InParanoid" id="Q4KLH4"/>
<dbReference type="OMA" id="EQDMRMG"/>
<dbReference type="OrthoDB" id="10067824at2759"/>
<dbReference type="PhylomeDB" id="Q4KLH4"/>
<dbReference type="TreeFam" id="TF315795"/>
<dbReference type="PRO" id="PR:Q4KLH4"/>
<dbReference type="Proteomes" id="UP000002494">
    <property type="component" value="Chromosome 15"/>
</dbReference>
<dbReference type="Bgee" id="ENSRNOG00000020782">
    <property type="expression patterns" value="Expressed in thymus and 19 other cell types or tissues"/>
</dbReference>
<dbReference type="ExpressionAtlas" id="Q4KLH4">
    <property type="expression patterns" value="baseline and differential"/>
</dbReference>
<dbReference type="GO" id="GO:0005737">
    <property type="term" value="C:cytoplasm"/>
    <property type="evidence" value="ECO:0007669"/>
    <property type="project" value="UniProtKB-SubCell"/>
</dbReference>
<dbReference type="GO" id="GO:0016363">
    <property type="term" value="C:nuclear matrix"/>
    <property type="evidence" value="ECO:0007669"/>
    <property type="project" value="UniProtKB-SubCell"/>
</dbReference>
<dbReference type="GO" id="GO:0016607">
    <property type="term" value="C:nuclear speck"/>
    <property type="evidence" value="ECO:0007669"/>
    <property type="project" value="UniProtKB-SubCell"/>
</dbReference>
<dbReference type="GO" id="GO:0005730">
    <property type="term" value="C:nucleolus"/>
    <property type="evidence" value="ECO:0007669"/>
    <property type="project" value="UniProtKB-SubCell"/>
</dbReference>
<dbReference type="GO" id="GO:0005654">
    <property type="term" value="C:nucleoplasm"/>
    <property type="evidence" value="ECO:0000266"/>
    <property type="project" value="RGD"/>
</dbReference>
<dbReference type="GO" id="GO:0005634">
    <property type="term" value="C:nucleus"/>
    <property type="evidence" value="ECO:0000318"/>
    <property type="project" value="GO_Central"/>
</dbReference>
<dbReference type="GO" id="GO:0042382">
    <property type="term" value="C:paraspeckles"/>
    <property type="evidence" value="ECO:0000266"/>
    <property type="project" value="RGD"/>
</dbReference>
<dbReference type="GO" id="GO:0003723">
    <property type="term" value="F:RNA binding"/>
    <property type="evidence" value="ECO:0000266"/>
    <property type="project" value="RGD"/>
</dbReference>
<dbReference type="GO" id="GO:0002218">
    <property type="term" value="P:activation of innate immune response"/>
    <property type="evidence" value="ECO:0000266"/>
    <property type="project" value="RGD"/>
</dbReference>
<dbReference type="GO" id="GO:0045087">
    <property type="term" value="P:innate immune response"/>
    <property type="evidence" value="ECO:0007669"/>
    <property type="project" value="UniProtKB-KW"/>
</dbReference>
<dbReference type="GO" id="GO:0140694">
    <property type="term" value="P:membraneless organelle assembly"/>
    <property type="evidence" value="ECO:0000266"/>
    <property type="project" value="RGD"/>
</dbReference>
<dbReference type="GO" id="GO:0045892">
    <property type="term" value="P:negative regulation of DNA-templated transcription"/>
    <property type="evidence" value="ECO:0000250"/>
    <property type="project" value="UniProtKB"/>
</dbReference>
<dbReference type="GO" id="GO:0042752">
    <property type="term" value="P:regulation of circadian rhythm"/>
    <property type="evidence" value="ECO:0000250"/>
    <property type="project" value="UniProtKB"/>
</dbReference>
<dbReference type="GO" id="GO:0006355">
    <property type="term" value="P:regulation of DNA-templated transcription"/>
    <property type="evidence" value="ECO:0000318"/>
    <property type="project" value="GO_Central"/>
</dbReference>
<dbReference type="GO" id="GO:0048511">
    <property type="term" value="P:rhythmic process"/>
    <property type="evidence" value="ECO:0007669"/>
    <property type="project" value="UniProtKB-KW"/>
</dbReference>
<dbReference type="CDD" id="cd12949">
    <property type="entry name" value="NOPS_PSPC1"/>
    <property type="match status" value="1"/>
</dbReference>
<dbReference type="CDD" id="cd12586">
    <property type="entry name" value="RRM1_PSP1"/>
    <property type="match status" value="1"/>
</dbReference>
<dbReference type="FunFam" id="3.30.70.330:FF:000043">
    <property type="entry name" value="paraspeckle component 1 isoform X1"/>
    <property type="match status" value="1"/>
</dbReference>
<dbReference type="FunFam" id="3.30.70.330:FF:000126">
    <property type="entry name" value="paraspeckle component 1 isoform X1"/>
    <property type="match status" value="1"/>
</dbReference>
<dbReference type="Gene3D" id="3.30.70.330">
    <property type="match status" value="2"/>
</dbReference>
<dbReference type="Gene3D" id="6.10.250.1170">
    <property type="match status" value="1"/>
</dbReference>
<dbReference type="InterPro" id="IPR012975">
    <property type="entry name" value="NOPS"/>
</dbReference>
<dbReference type="InterPro" id="IPR012677">
    <property type="entry name" value="Nucleotide-bd_a/b_plait_sf"/>
</dbReference>
<dbReference type="InterPro" id="IPR034522">
    <property type="entry name" value="PSP1_RRM1"/>
</dbReference>
<dbReference type="InterPro" id="IPR035979">
    <property type="entry name" value="RBD_domain_sf"/>
</dbReference>
<dbReference type="InterPro" id="IPR000504">
    <property type="entry name" value="RRM_dom"/>
</dbReference>
<dbReference type="PANTHER" id="PTHR23189">
    <property type="entry name" value="RNA RECOGNITION MOTIF-CONTAINING"/>
    <property type="match status" value="1"/>
</dbReference>
<dbReference type="Pfam" id="PF08075">
    <property type="entry name" value="NOPS"/>
    <property type="match status" value="1"/>
</dbReference>
<dbReference type="Pfam" id="PF00076">
    <property type="entry name" value="RRM_1"/>
    <property type="match status" value="2"/>
</dbReference>
<dbReference type="SMART" id="SM00360">
    <property type="entry name" value="RRM"/>
    <property type="match status" value="2"/>
</dbReference>
<dbReference type="SUPFAM" id="SSF54928">
    <property type="entry name" value="RNA-binding domain, RBD"/>
    <property type="match status" value="1"/>
</dbReference>
<dbReference type="PROSITE" id="PS50102">
    <property type="entry name" value="RRM"/>
    <property type="match status" value="2"/>
</dbReference>
<accession>Q4KLH4</accession>
<feature type="chain" id="PRO_0000297542" description="Paraspeckle component 1">
    <location>
        <begin position="1"/>
        <end position="522"/>
    </location>
</feature>
<feature type="domain" description="RRM 1" evidence="4">
    <location>
        <begin position="81"/>
        <end position="153"/>
    </location>
</feature>
<feature type="domain" description="RRM 2" evidence="4">
    <location>
        <begin position="155"/>
        <end position="236"/>
    </location>
</feature>
<feature type="region of interest" description="Sufficient for paraspeckles localization" evidence="2">
    <location>
        <begin position="124"/>
        <end position="357"/>
    </location>
</feature>
<feature type="region of interest" description="Sufficient for perinucleolar caps localization and interaction with NONO" evidence="2">
    <location>
        <begin position="230"/>
        <end position="357"/>
    </location>
</feature>
<feature type="region of interest" description="Disordered" evidence="5">
    <location>
        <begin position="459"/>
        <end position="522"/>
    </location>
</feature>
<feature type="coiled-coil region" evidence="3">
    <location>
        <begin position="282"/>
        <end position="376"/>
    </location>
</feature>
<feature type="compositionally biased region" description="Polar residues" evidence="5">
    <location>
        <begin position="471"/>
        <end position="489"/>
    </location>
</feature>
<feature type="compositionally biased region" description="Gly residues" evidence="5">
    <location>
        <begin position="497"/>
        <end position="513"/>
    </location>
</feature>
<feature type="modified residue" description="N-acetylmethionine" evidence="2">
    <location>
        <position position="1"/>
    </location>
</feature>
<feature type="modified residue" description="Phosphoserine" evidence="7">
    <location>
        <position position="408"/>
    </location>
</feature>
<feature type="modified residue" description="Phosphoserine" evidence="2">
    <location>
        <position position="472"/>
    </location>
</feature>
<feature type="modified residue" description="Phosphoserine" evidence="7">
    <location>
        <position position="476"/>
    </location>
</feature>
<feature type="modified residue" description="Omega-N-methylarginine" evidence="2">
    <location>
        <position position="506"/>
    </location>
</feature>
<feature type="modified residue" description="Phosphoserine" evidence="2">
    <location>
        <position position="508"/>
    </location>
</feature>
<keyword id="KW-0007">Acetylation</keyword>
<keyword id="KW-0010">Activator</keyword>
<keyword id="KW-0090">Biological rhythms</keyword>
<keyword id="KW-0175">Coiled coil</keyword>
<keyword id="KW-0963">Cytoplasm</keyword>
<keyword id="KW-0391">Immunity</keyword>
<keyword id="KW-0399">Innate immunity</keyword>
<keyword id="KW-0488">Methylation</keyword>
<keyword id="KW-0539">Nucleus</keyword>
<keyword id="KW-0597">Phosphoprotein</keyword>
<keyword id="KW-1185">Reference proteome</keyword>
<keyword id="KW-0677">Repeat</keyword>
<keyword id="KW-0678">Repressor</keyword>
<keyword id="KW-0694">RNA-binding</keyword>
<keyword id="KW-0804">Transcription</keyword>
<keyword id="KW-0805">Transcription regulation</keyword>
<proteinExistence type="evidence at protein level"/>
<evidence type="ECO:0000250" key="1">
    <source>
        <dbReference type="UniProtKB" id="Q8R326"/>
    </source>
</evidence>
<evidence type="ECO:0000250" key="2">
    <source>
        <dbReference type="UniProtKB" id="Q8WXF1"/>
    </source>
</evidence>
<evidence type="ECO:0000255" key="3"/>
<evidence type="ECO:0000255" key="4">
    <source>
        <dbReference type="PROSITE-ProRule" id="PRU00176"/>
    </source>
</evidence>
<evidence type="ECO:0000256" key="5">
    <source>
        <dbReference type="SAM" id="MobiDB-lite"/>
    </source>
</evidence>
<evidence type="ECO:0000305" key="6"/>
<evidence type="ECO:0007744" key="7">
    <source>
    </source>
</evidence>
<name>PSPC1_RAT</name>
<reference key="1">
    <citation type="journal article" date="2004" name="Genome Res.">
        <title>The status, quality, and expansion of the NIH full-length cDNA project: the Mammalian Gene Collection (MGC).</title>
        <authorList>
            <consortium name="The MGC Project Team"/>
        </authorList>
    </citation>
    <scope>NUCLEOTIDE SEQUENCE [LARGE SCALE MRNA]</scope>
    <source>
        <tissue>Thymus</tissue>
    </source>
</reference>
<reference key="2">
    <citation type="journal article" date="2012" name="Nat. Commun.">
        <title>Quantitative maps of protein phosphorylation sites across 14 different rat organs and tissues.</title>
        <authorList>
            <person name="Lundby A."/>
            <person name="Secher A."/>
            <person name="Lage K."/>
            <person name="Nordsborg N.B."/>
            <person name="Dmytriyev A."/>
            <person name="Lundby C."/>
            <person name="Olsen J.V."/>
        </authorList>
    </citation>
    <scope>PHOSPHORYLATION [LARGE SCALE ANALYSIS] AT SER-408 AND SER-476</scope>
    <scope>IDENTIFICATION BY MASS SPECTROMETRY [LARGE SCALE ANALYSIS]</scope>
</reference>
<organism>
    <name type="scientific">Rattus norvegicus</name>
    <name type="common">Rat</name>
    <dbReference type="NCBI Taxonomy" id="10116"/>
    <lineage>
        <taxon>Eukaryota</taxon>
        <taxon>Metazoa</taxon>
        <taxon>Chordata</taxon>
        <taxon>Craniata</taxon>
        <taxon>Vertebrata</taxon>
        <taxon>Euteleostomi</taxon>
        <taxon>Mammalia</taxon>
        <taxon>Eutheria</taxon>
        <taxon>Euarchontoglires</taxon>
        <taxon>Glires</taxon>
        <taxon>Rodentia</taxon>
        <taxon>Myomorpha</taxon>
        <taxon>Muroidea</taxon>
        <taxon>Muridae</taxon>
        <taxon>Murinae</taxon>
        <taxon>Rattus</taxon>
    </lineage>
</organism>
<comment type="function">
    <text evidence="1 2">RNA-binding protein required for the formation of nuclear paraspeckles (By similarity). Binds to poly(A), poly(G) and poly(U) RNA homopolymers (By similarity). Regulates, cooperatively with NONO and SFPQ, androgen receptor-mediated gene transcription activity in Sertoli cell line (By similarity). Regulates the circadian clock by repressing the transcriptional activator activity of the CLOCK-BMAL1 heterodimer (By similarity). Plays a role in the regulation of DNA virus-mediated innate immune response by assembling into the HDP-RNP complex, a complex that serves as a platform for IRF3 phosphorylation and subsequent innate immune response activation through the cGAS-STING pathway (By similarity).</text>
</comment>
<comment type="subunit">
    <text evidence="1 2">Forms heterodimers with NONO; this involves formation of a coiled coil domain by helices from both proteins (By similarity). Found in a RNP complex with CAT2 transcribed nuclear RNA (CTN-RNA) (By similarity). Interaction with NONO is required for its targeting to paraspeckles and perinucleolar caps. Interacts with SFPQ. Part of the HDP-RNP complex composed of at least HEXIM1, PRKDC, XRCC5, XRCC6, paraspeckle proteins (SFPQ, NONO, PSPC1, RBM14, and MATR3) and NEAT1 RNA. Interacts with ALKBH5 (when acetylated); interaction with acetylated ALKBH5 facilitates recognition of N(6)-methyladenosine (m6A) RNAs (By similarity).</text>
</comment>
<comment type="subcellular location">
    <subcellularLocation>
        <location evidence="2">Nucleus speckle</location>
    </subcellularLocation>
    <subcellularLocation>
        <location evidence="2">Nucleus</location>
        <location evidence="2">Nucleolus</location>
    </subcellularLocation>
    <subcellularLocation>
        <location evidence="1">Nucleus matrix</location>
    </subcellularLocation>
    <subcellularLocation>
        <location evidence="1">Cytoplasm</location>
    </subcellularLocation>
    <text evidence="2">In punctate subnuclear structures often located adjacent to splicing speckles, called paraspeckles. Colocalizes with NONO and SFPQ in paraspeckles and perinucleolar caps in an RNA-dependent manner. May cycle between paraspeckles and nucleolus. In telophase, when daughter nuclei form, localizes to perinucleolar caps.</text>
</comment>
<comment type="similarity">
    <text evidence="6">Belongs to the PSPC family.</text>
</comment>
<sequence>MMLRGNLKQVRIEKNPARLRALESAAGESEPVAAAAMALTLAGEQPPPPAPSEEHPDEEMGFTIDIKSFLKPGEKTYTQRCRLFVGNLPTDITEEDFKRLFERYGEPSEVFINRDRGFGFIRLESRTLAEIAKAELDGTILKSRPLRIRFATHGAALTVKNLSPVVSNELLEQAFSQFGPVEKAVVVVDDRGRATGKGFVEFAAKPPARKALERCGDGAFLLTTTPRPVIVEPMEQFDDEDGLPEKLMQKTQQYHKEREQPPRFAQPGTFEFEYASRWKALDEMEKQQREQVDRNIREAKEKLEAEMEAARHEHQLMLMRQDLMRRQEELRRLEELRNQELQKRKQIQLRHEEEHRRREEEMIRHREQEELRRQQEGFKPNYMENREQEMRMGDMGPRGAINMGDAFSPAPAGTQGPPPMMGMNMNNRGTIPGPPMGPGPAMGPEGAANMGTPMIPDNGAVHNDRFPQGPPSQMGSPMGNRTGSETPQAPMSAVGPVSGGPGGFGRGSQGGNFEGPNKRRRY</sequence>
<protein>
    <recommendedName>
        <fullName>Paraspeckle component 1</fullName>
    </recommendedName>
</protein>